<comment type="function">
    <text evidence="1">Catalyzes the production of GABA. The calmodulin-binding is calcium-dependent and it is proposed that this may, directly or indirectly, form a calcium regulated control of GABA biosynthesis (By similarity).</text>
</comment>
<comment type="catalytic activity">
    <reaction>
        <text>L-glutamate + H(+) = 4-aminobutanoate + CO2</text>
        <dbReference type="Rhea" id="RHEA:17785"/>
        <dbReference type="ChEBI" id="CHEBI:15378"/>
        <dbReference type="ChEBI" id="CHEBI:16526"/>
        <dbReference type="ChEBI" id="CHEBI:29985"/>
        <dbReference type="ChEBI" id="CHEBI:59888"/>
        <dbReference type="EC" id="4.1.1.15"/>
    </reaction>
</comment>
<comment type="cofactor">
    <cofactor evidence="1">
        <name>pyridoxal 5'-phosphate</name>
        <dbReference type="ChEBI" id="CHEBI:597326"/>
    </cofactor>
</comment>
<comment type="subunit">
    <text evidence="1">Homohexamer. Interacts with calmodulin (By similarity).</text>
</comment>
<comment type="tissue specificity">
    <text evidence="3">Expressed at low levels in siliques.</text>
</comment>
<comment type="similarity">
    <text evidence="4">Belongs to the group II decarboxylase family.</text>
</comment>
<gene>
    <name type="primary">GAD3</name>
    <name type="ordered locus">At2g02000</name>
    <name type="ORF">F14H20.7</name>
</gene>
<dbReference type="EC" id="4.1.1.15"/>
<dbReference type="EMBL" id="AC006532">
    <property type="protein sequence ID" value="AAD20093.1"/>
    <property type="molecule type" value="Genomic_DNA"/>
</dbReference>
<dbReference type="EMBL" id="CP002685">
    <property type="protein sequence ID" value="AEC05531.1"/>
    <property type="molecule type" value="Genomic_DNA"/>
</dbReference>
<dbReference type="EMBL" id="AK118125">
    <property type="protein sequence ID" value="BAC42751.1"/>
    <property type="molecule type" value="mRNA"/>
</dbReference>
<dbReference type="PIR" id="G84431">
    <property type="entry name" value="G84431"/>
</dbReference>
<dbReference type="RefSeq" id="NP_178309.1">
    <property type="nucleotide sequence ID" value="NM_126261.2"/>
</dbReference>
<dbReference type="SMR" id="Q9ZPS4"/>
<dbReference type="FunCoup" id="Q9ZPS4">
    <property type="interactions" value="321"/>
</dbReference>
<dbReference type="STRING" id="3702.Q9ZPS4"/>
<dbReference type="iPTMnet" id="Q9ZPS4"/>
<dbReference type="PaxDb" id="3702-AT2G02000.1"/>
<dbReference type="ProteomicsDB" id="224682"/>
<dbReference type="EnsemblPlants" id="AT2G02000.1">
    <property type="protein sequence ID" value="AT2G02000.1"/>
    <property type="gene ID" value="AT2G02000"/>
</dbReference>
<dbReference type="GeneID" id="814731"/>
<dbReference type="Gramene" id="AT2G02000.1">
    <property type="protein sequence ID" value="AT2G02000.1"/>
    <property type="gene ID" value="AT2G02000"/>
</dbReference>
<dbReference type="KEGG" id="ath:AT2G02000"/>
<dbReference type="Araport" id="AT2G02000"/>
<dbReference type="TAIR" id="AT2G02000">
    <property type="gene designation" value="GAD3"/>
</dbReference>
<dbReference type="eggNOG" id="KOG1383">
    <property type="taxonomic scope" value="Eukaryota"/>
</dbReference>
<dbReference type="HOGENOM" id="CLU_019582_2_2_1"/>
<dbReference type="InParanoid" id="Q9ZPS4"/>
<dbReference type="OMA" id="MEPECNT"/>
<dbReference type="PhylomeDB" id="Q9ZPS4"/>
<dbReference type="BioCyc" id="ARA:AT2G02000-MONOMER"/>
<dbReference type="PRO" id="PR:Q9ZPS4"/>
<dbReference type="Proteomes" id="UP000006548">
    <property type="component" value="Chromosome 2"/>
</dbReference>
<dbReference type="ExpressionAtlas" id="Q9ZPS4">
    <property type="expression patterns" value="baseline and differential"/>
</dbReference>
<dbReference type="GO" id="GO:0005739">
    <property type="term" value="C:mitochondrion"/>
    <property type="evidence" value="ECO:0007005"/>
    <property type="project" value="TAIR"/>
</dbReference>
<dbReference type="GO" id="GO:0005516">
    <property type="term" value="F:calmodulin binding"/>
    <property type="evidence" value="ECO:0007669"/>
    <property type="project" value="UniProtKB-KW"/>
</dbReference>
<dbReference type="GO" id="GO:0004351">
    <property type="term" value="F:glutamate decarboxylase activity"/>
    <property type="evidence" value="ECO:0007669"/>
    <property type="project" value="UniProtKB-EC"/>
</dbReference>
<dbReference type="GO" id="GO:0030170">
    <property type="term" value="F:pyridoxal phosphate binding"/>
    <property type="evidence" value="ECO:0007669"/>
    <property type="project" value="InterPro"/>
</dbReference>
<dbReference type="GO" id="GO:0006536">
    <property type="term" value="P:glutamate metabolic process"/>
    <property type="evidence" value="ECO:0007669"/>
    <property type="project" value="InterPro"/>
</dbReference>
<dbReference type="CDD" id="cd06450">
    <property type="entry name" value="DOPA_deC_like"/>
    <property type="match status" value="1"/>
</dbReference>
<dbReference type="FunFam" id="3.40.640.10:FF:000022">
    <property type="entry name" value="Glutamate decarboxylase"/>
    <property type="match status" value="1"/>
</dbReference>
<dbReference type="FunFam" id="3.90.1150.160:FF:000001">
    <property type="entry name" value="Glutamate decarboxylase"/>
    <property type="match status" value="1"/>
</dbReference>
<dbReference type="FunFam" id="4.10.280.50:FF:000002">
    <property type="entry name" value="Glutamate decarboxylase"/>
    <property type="match status" value="1"/>
</dbReference>
<dbReference type="Gene3D" id="3.90.1150.160">
    <property type="match status" value="1"/>
</dbReference>
<dbReference type="Gene3D" id="4.10.280.50">
    <property type="match status" value="1"/>
</dbReference>
<dbReference type="Gene3D" id="3.40.640.10">
    <property type="entry name" value="Type I PLP-dependent aspartate aminotransferase-like (Major domain)"/>
    <property type="match status" value="1"/>
</dbReference>
<dbReference type="InterPro" id="IPR010107">
    <property type="entry name" value="Glutamate_decarboxylase"/>
</dbReference>
<dbReference type="InterPro" id="IPR002129">
    <property type="entry name" value="PyrdxlP-dep_de-COase"/>
</dbReference>
<dbReference type="InterPro" id="IPR015424">
    <property type="entry name" value="PyrdxlP-dep_Trfase"/>
</dbReference>
<dbReference type="InterPro" id="IPR015421">
    <property type="entry name" value="PyrdxlP-dep_Trfase_major"/>
</dbReference>
<dbReference type="NCBIfam" id="TIGR01788">
    <property type="entry name" value="Glu-decarb-GAD"/>
    <property type="match status" value="1"/>
</dbReference>
<dbReference type="PANTHER" id="PTHR43321">
    <property type="entry name" value="GLUTAMATE DECARBOXYLASE"/>
    <property type="match status" value="1"/>
</dbReference>
<dbReference type="PANTHER" id="PTHR43321:SF38">
    <property type="entry name" value="GLUTAMATE DECARBOXYLASE 3-RELATED"/>
    <property type="match status" value="1"/>
</dbReference>
<dbReference type="Pfam" id="PF00282">
    <property type="entry name" value="Pyridoxal_deC"/>
    <property type="match status" value="1"/>
</dbReference>
<dbReference type="SUPFAM" id="SSF53383">
    <property type="entry name" value="PLP-dependent transferases"/>
    <property type="match status" value="1"/>
</dbReference>
<protein>
    <recommendedName>
        <fullName>Glutamate decarboxylase 3</fullName>
        <shortName>GAD 3</shortName>
        <ecNumber>4.1.1.15</ecNumber>
    </recommendedName>
</protein>
<accession>Q9ZPS4</accession>
<organism>
    <name type="scientific">Arabidopsis thaliana</name>
    <name type="common">Mouse-ear cress</name>
    <dbReference type="NCBI Taxonomy" id="3702"/>
    <lineage>
        <taxon>Eukaryota</taxon>
        <taxon>Viridiplantae</taxon>
        <taxon>Streptophyta</taxon>
        <taxon>Embryophyta</taxon>
        <taxon>Tracheophyta</taxon>
        <taxon>Spermatophyta</taxon>
        <taxon>Magnoliopsida</taxon>
        <taxon>eudicotyledons</taxon>
        <taxon>Gunneridae</taxon>
        <taxon>Pentapetalae</taxon>
        <taxon>rosids</taxon>
        <taxon>malvids</taxon>
        <taxon>Brassicales</taxon>
        <taxon>Brassicaceae</taxon>
        <taxon>Camelineae</taxon>
        <taxon>Arabidopsis</taxon>
    </lineage>
</organism>
<reference key="1">
    <citation type="journal article" date="1999" name="Nature">
        <title>Sequence and analysis of chromosome 2 of the plant Arabidopsis thaliana.</title>
        <authorList>
            <person name="Lin X."/>
            <person name="Kaul S."/>
            <person name="Rounsley S.D."/>
            <person name="Shea T.P."/>
            <person name="Benito M.-I."/>
            <person name="Town C.D."/>
            <person name="Fujii C.Y."/>
            <person name="Mason T.M."/>
            <person name="Bowman C.L."/>
            <person name="Barnstead M.E."/>
            <person name="Feldblyum T.V."/>
            <person name="Buell C.R."/>
            <person name="Ketchum K.A."/>
            <person name="Lee J.J."/>
            <person name="Ronning C.M."/>
            <person name="Koo H.L."/>
            <person name="Moffat K.S."/>
            <person name="Cronin L.A."/>
            <person name="Shen M."/>
            <person name="Pai G."/>
            <person name="Van Aken S."/>
            <person name="Umayam L."/>
            <person name="Tallon L.J."/>
            <person name="Gill J.E."/>
            <person name="Adams M.D."/>
            <person name="Carrera A.J."/>
            <person name="Creasy T.H."/>
            <person name="Goodman H.M."/>
            <person name="Somerville C.R."/>
            <person name="Copenhaver G.P."/>
            <person name="Preuss D."/>
            <person name="Nierman W.C."/>
            <person name="White O."/>
            <person name="Eisen J.A."/>
            <person name="Salzberg S.L."/>
            <person name="Fraser C.M."/>
            <person name="Venter J.C."/>
        </authorList>
    </citation>
    <scope>NUCLEOTIDE SEQUENCE [LARGE SCALE GENOMIC DNA]</scope>
    <source>
        <strain>cv. Columbia</strain>
    </source>
</reference>
<reference key="2">
    <citation type="journal article" date="2017" name="Plant J.">
        <title>Araport11: a complete reannotation of the Arabidopsis thaliana reference genome.</title>
        <authorList>
            <person name="Cheng C.Y."/>
            <person name="Krishnakumar V."/>
            <person name="Chan A.P."/>
            <person name="Thibaud-Nissen F."/>
            <person name="Schobel S."/>
            <person name="Town C.D."/>
        </authorList>
    </citation>
    <scope>GENOME REANNOTATION</scope>
    <source>
        <strain>cv. Columbia</strain>
    </source>
</reference>
<reference key="3">
    <citation type="journal article" date="2002" name="Science">
        <title>Functional annotation of a full-length Arabidopsis cDNA collection.</title>
        <authorList>
            <person name="Seki M."/>
            <person name="Narusaka M."/>
            <person name="Kamiya A."/>
            <person name="Ishida J."/>
            <person name="Satou M."/>
            <person name="Sakurai T."/>
            <person name="Nakajima M."/>
            <person name="Enju A."/>
            <person name="Akiyama K."/>
            <person name="Oono Y."/>
            <person name="Muramatsu M."/>
            <person name="Hayashizaki Y."/>
            <person name="Kawai J."/>
            <person name="Carninci P."/>
            <person name="Itoh M."/>
            <person name="Ishii Y."/>
            <person name="Arakawa T."/>
            <person name="Shibata K."/>
            <person name="Shinagawa A."/>
            <person name="Shinozaki K."/>
        </authorList>
    </citation>
    <scope>NUCLEOTIDE SEQUENCE [LARGE SCALE MRNA]</scope>
    <source>
        <strain>cv. Columbia</strain>
    </source>
</reference>
<reference key="4">
    <citation type="journal article" date="1999" name="Trends Plant Sci.">
        <title>Metabolism and functions of gamma-aminobutyric acid.</title>
        <authorList>
            <person name="Shelp B.J."/>
            <person name="Bown A.W."/>
            <person name="McLean M.D."/>
        </authorList>
    </citation>
    <scope>IDENTIFICATION</scope>
</reference>
<reference key="5">
    <citation type="journal article" date="2008" name="Plant Cell Physiol.">
        <title>Contribution of the GABA shunt to hypoxia-induced alanine accumulation in roots of Arabidopsis thaliana.</title>
        <authorList>
            <person name="Miyashita Y."/>
            <person name="Good A.G."/>
        </authorList>
    </citation>
    <scope>TISSUE SPECIFICITY</scope>
</reference>
<proteinExistence type="evidence at transcript level"/>
<evidence type="ECO:0000250" key="1"/>
<evidence type="ECO:0000250" key="2">
    <source>
        <dbReference type="UniProtKB" id="Q9ZPS3"/>
    </source>
</evidence>
<evidence type="ECO:0000269" key="3">
    <source>
    </source>
</evidence>
<evidence type="ECO:0000305" key="4"/>
<keyword id="KW-0112">Calmodulin-binding</keyword>
<keyword id="KW-0210">Decarboxylase</keyword>
<keyword id="KW-0456">Lyase</keyword>
<keyword id="KW-0597">Phosphoprotein</keyword>
<keyword id="KW-0663">Pyridoxal phosphate</keyword>
<keyword id="KW-1185">Reference proteome</keyword>
<sequence length="500" mass="56507">MVLSKTASKSDDSIHSTFASRYVRNSISRFEIPKNSIPKEAAYQIINDELKFDGNPRLNLASFVTTWMEPECDKLMMESINKNNVEMDQYPVTTDLQNRCVNMIARLFNAPLGDGEAAIGVGTVGSSEAVMLAGLAFKRQWQNKRKALGLPYDRPNIVTGANIQVCLEKFARYFEVELKEVKLREGYYVMDPDKAVEMVDENTICVVAILGSTLTGEFEDVKLLNDLLVEKNKKTGWDTPIHVDAASGGFIAPFLYPDLEWDFRLPLVKSINVSGHKYGLVYAGIGWVVWRTKTDLPDELIFHINYLGADQPTFTLNFSKGSSQVIAQYYQLIRLGFEGYRNVMDNCRENMMVLRQGLEKTGRFNIVSKENGVPLVAFSLKDSSRHNEFEVAEMLRRFGWIVPAYTMPADAQHVTVLRVVIREDFSRTLAERLVADFEKVLHELDTLPARVHAKMASGKVNGVKKTPEETQREVTAYWKKFVDTKTDKNGVPLVASITNQ</sequence>
<feature type="chain" id="PRO_0000416954" description="Glutamate decarboxylase 3">
    <location>
        <begin position="1"/>
        <end position="500"/>
    </location>
</feature>
<feature type="modified residue" description="Phosphoserine" evidence="2">
    <location>
        <position position="8"/>
    </location>
</feature>
<feature type="modified residue" description="N6-(pyridoxal phosphate)lysine" evidence="1">
    <location>
        <position position="277"/>
    </location>
</feature>
<name>DCE3_ARATH</name>